<proteinExistence type="inferred from homology"/>
<name>ODO2_BUCAP</name>
<comment type="function">
    <text evidence="2">E2 component of the 2-oxoglutarate dehydrogenase (OGDH) complex which catalyzes the second step in the conversion of 2-oxoglutarate to succinyl-CoA and CO(2).</text>
</comment>
<comment type="catalytic activity">
    <reaction evidence="2">
        <text>N(6)-[(R)-dihydrolipoyl]-L-lysyl-[protein] + succinyl-CoA = N(6)-[(R)-S(8)-succinyldihydrolipoyl]-L-lysyl-[protein] + CoA</text>
        <dbReference type="Rhea" id="RHEA:15213"/>
        <dbReference type="Rhea" id="RHEA-COMP:10475"/>
        <dbReference type="Rhea" id="RHEA-COMP:20092"/>
        <dbReference type="ChEBI" id="CHEBI:57287"/>
        <dbReference type="ChEBI" id="CHEBI:57292"/>
        <dbReference type="ChEBI" id="CHEBI:83100"/>
        <dbReference type="ChEBI" id="CHEBI:83120"/>
        <dbReference type="EC" id="2.3.1.61"/>
    </reaction>
</comment>
<comment type="cofactor">
    <cofactor evidence="1">
        <name>(R)-lipoate</name>
        <dbReference type="ChEBI" id="CHEBI:83088"/>
    </cofactor>
    <text evidence="1">Binds 1 lipoyl cofactor covalently.</text>
</comment>
<comment type="pathway">
    <text>Amino-acid degradation; L-lysine degradation via saccharopine pathway; glutaryl-CoA from L-lysine: step 6/6.</text>
</comment>
<comment type="subunit">
    <text evidence="2">Forms a 24-polypeptide structural core with octahedral symmetry. Part of the 2-oxoglutarate dehydrogenase (OGDH) complex composed of E1 (2-oxoglutarate dehydrogenase), E2 (dihydrolipoamide succinyltransferase) and E3 (dihydrolipoamide dehydrogenase); the complex contains multiple copies of the three enzymatic components (E1, E2 and E3).</text>
</comment>
<comment type="similarity">
    <text evidence="4">Belongs to the 2-oxoacid dehydrogenase family.</text>
</comment>
<feature type="chain" id="PRO_0000162260" description="Dihydrolipoyllysine-residue succinyltransferase component of 2-oxoglutarate dehydrogenase complex">
    <location>
        <begin position="1"/>
        <end position="393"/>
    </location>
</feature>
<feature type="domain" description="Lipoyl-binding" evidence="3">
    <location>
        <begin position="3"/>
        <end position="78"/>
    </location>
</feature>
<feature type="active site" evidence="2">
    <location>
        <position position="364"/>
    </location>
</feature>
<feature type="active site" evidence="2">
    <location>
        <position position="368"/>
    </location>
</feature>
<feature type="modified residue" description="N6-lipoyllysine" evidence="3">
    <location>
        <position position="44"/>
    </location>
</feature>
<accession>Q8K9N2</accession>
<keyword id="KW-0012">Acyltransferase</keyword>
<keyword id="KW-0450">Lipoyl</keyword>
<keyword id="KW-0808">Transferase</keyword>
<keyword id="KW-0816">Tricarboxylic acid cycle</keyword>
<evidence type="ECO:0000250" key="1"/>
<evidence type="ECO:0000250" key="2">
    <source>
        <dbReference type="UniProtKB" id="P0AFG6"/>
    </source>
</evidence>
<evidence type="ECO:0000255" key="3">
    <source>
        <dbReference type="PROSITE-ProRule" id="PRU01066"/>
    </source>
</evidence>
<evidence type="ECO:0000305" key="4"/>
<gene>
    <name type="primary">sucB</name>
    <name type="ordered locus">BUsg_293</name>
</gene>
<organism>
    <name type="scientific">Buchnera aphidicola subsp. Schizaphis graminum (strain Sg)</name>
    <dbReference type="NCBI Taxonomy" id="198804"/>
    <lineage>
        <taxon>Bacteria</taxon>
        <taxon>Pseudomonadati</taxon>
        <taxon>Pseudomonadota</taxon>
        <taxon>Gammaproteobacteria</taxon>
        <taxon>Enterobacterales</taxon>
        <taxon>Erwiniaceae</taxon>
        <taxon>Buchnera</taxon>
    </lineage>
</organism>
<reference key="1">
    <citation type="journal article" date="2002" name="Science">
        <title>50 million years of genomic stasis in endosymbiotic bacteria.</title>
        <authorList>
            <person name="Tamas I."/>
            <person name="Klasson L."/>
            <person name="Canbaeck B."/>
            <person name="Naeslund A.K."/>
            <person name="Eriksson A.-S."/>
            <person name="Wernegreen J.J."/>
            <person name="Sandstroem J.P."/>
            <person name="Moran N.A."/>
            <person name="Andersson S.G.E."/>
        </authorList>
    </citation>
    <scope>NUCLEOTIDE SEQUENCE [LARGE SCALE GENOMIC DNA]</scope>
    <source>
        <strain>Sg</strain>
    </source>
</reference>
<sequence length="393" mass="45154">MNRINILVPDLPESVNDAVVVKWYKKIGEQISSEDNIVDIETDKVMLEVSAPCNGILNEILEKEGSIVKSNQILGNIVESKNIESKTKSKLEKSNKYFIKDKNFNISFKEKIYNFPPSIRRIIRIKKNKEIFNELNYIKNQENIIEEKLNDQSFSNEKEKKIYENRIKMTRLRQKIAERLLETKNNTAMLTTFNEVNMQPIISLRKKYGEFFEKKHGVRIGFMPFFVKAVVESLKKFPEINASIDKNDIVYYKNIDVSIAVSTPRGVITPVLRNADNMSMADIEKKIKEFSIKGIENKIKIEELIGGNFTITNGGIFGSLMSTPIINPPQSAILGMHLIKERPMAINGKVKILPMMYLALSYDHRLIDGKESVSFLVTIKNILEDFNRIIINV</sequence>
<dbReference type="EC" id="2.3.1.61" evidence="2"/>
<dbReference type="EMBL" id="AE013218">
    <property type="protein sequence ID" value="AAM67848.1"/>
    <property type="molecule type" value="Genomic_DNA"/>
</dbReference>
<dbReference type="RefSeq" id="WP_011053815.1">
    <property type="nucleotide sequence ID" value="NC_004061.1"/>
</dbReference>
<dbReference type="SMR" id="Q8K9N2"/>
<dbReference type="STRING" id="198804.BUsg_293"/>
<dbReference type="GeneID" id="93003763"/>
<dbReference type="KEGG" id="bas:BUsg_293"/>
<dbReference type="eggNOG" id="COG0508">
    <property type="taxonomic scope" value="Bacteria"/>
</dbReference>
<dbReference type="HOGENOM" id="CLU_016733_0_0_6"/>
<dbReference type="UniPathway" id="UPA00868">
    <property type="reaction ID" value="UER00840"/>
</dbReference>
<dbReference type="Proteomes" id="UP000000416">
    <property type="component" value="Chromosome"/>
</dbReference>
<dbReference type="GO" id="GO:0005829">
    <property type="term" value="C:cytosol"/>
    <property type="evidence" value="ECO:0007669"/>
    <property type="project" value="TreeGrafter"/>
</dbReference>
<dbReference type="GO" id="GO:0045252">
    <property type="term" value="C:oxoglutarate dehydrogenase complex"/>
    <property type="evidence" value="ECO:0007669"/>
    <property type="project" value="InterPro"/>
</dbReference>
<dbReference type="GO" id="GO:0004149">
    <property type="term" value="F:dihydrolipoyllysine-residue succinyltransferase activity"/>
    <property type="evidence" value="ECO:0007669"/>
    <property type="project" value="UniProtKB-EC"/>
</dbReference>
<dbReference type="GO" id="GO:0033512">
    <property type="term" value="P:L-lysine catabolic process to acetyl-CoA via saccharopine"/>
    <property type="evidence" value="ECO:0007669"/>
    <property type="project" value="UniProtKB-UniPathway"/>
</dbReference>
<dbReference type="GO" id="GO:0006099">
    <property type="term" value="P:tricarboxylic acid cycle"/>
    <property type="evidence" value="ECO:0007669"/>
    <property type="project" value="UniProtKB-KW"/>
</dbReference>
<dbReference type="CDD" id="cd06849">
    <property type="entry name" value="lipoyl_domain"/>
    <property type="match status" value="1"/>
</dbReference>
<dbReference type="Gene3D" id="2.40.50.100">
    <property type="match status" value="1"/>
</dbReference>
<dbReference type="Gene3D" id="3.30.559.10">
    <property type="entry name" value="Chloramphenicol acetyltransferase-like domain"/>
    <property type="match status" value="1"/>
</dbReference>
<dbReference type="InterPro" id="IPR050537">
    <property type="entry name" value="2-oxoacid_dehydrogenase"/>
</dbReference>
<dbReference type="InterPro" id="IPR001078">
    <property type="entry name" value="2-oxoacid_DH_actylTfrase"/>
</dbReference>
<dbReference type="InterPro" id="IPR000089">
    <property type="entry name" value="Biotin_lipoyl"/>
</dbReference>
<dbReference type="InterPro" id="IPR023213">
    <property type="entry name" value="CAT-like_dom_sf"/>
</dbReference>
<dbReference type="InterPro" id="IPR011053">
    <property type="entry name" value="Single_hybrid_motif"/>
</dbReference>
<dbReference type="InterPro" id="IPR006255">
    <property type="entry name" value="SucB"/>
</dbReference>
<dbReference type="NCBIfam" id="NF004309">
    <property type="entry name" value="PRK05704.1"/>
    <property type="match status" value="1"/>
</dbReference>
<dbReference type="NCBIfam" id="TIGR01347">
    <property type="entry name" value="sucB"/>
    <property type="match status" value="1"/>
</dbReference>
<dbReference type="PANTHER" id="PTHR43416:SF5">
    <property type="entry name" value="DIHYDROLIPOYLLYSINE-RESIDUE SUCCINYLTRANSFERASE COMPONENT OF 2-OXOGLUTARATE DEHYDROGENASE COMPLEX, MITOCHONDRIAL"/>
    <property type="match status" value="1"/>
</dbReference>
<dbReference type="PANTHER" id="PTHR43416">
    <property type="entry name" value="DIHYDROLIPOYLLYSINE-RESIDUE SUCCINYLTRANSFERASE COMPONENT OF 2-OXOGLUTARATE DEHYDROGENASE COMPLEX, MITOCHONDRIAL-RELATED"/>
    <property type="match status" value="1"/>
</dbReference>
<dbReference type="Pfam" id="PF00198">
    <property type="entry name" value="2-oxoacid_dh"/>
    <property type="match status" value="1"/>
</dbReference>
<dbReference type="Pfam" id="PF00364">
    <property type="entry name" value="Biotin_lipoyl"/>
    <property type="match status" value="1"/>
</dbReference>
<dbReference type="SUPFAM" id="SSF52777">
    <property type="entry name" value="CoA-dependent acyltransferases"/>
    <property type="match status" value="1"/>
</dbReference>
<dbReference type="SUPFAM" id="SSF51230">
    <property type="entry name" value="Single hybrid motif"/>
    <property type="match status" value="1"/>
</dbReference>
<dbReference type="PROSITE" id="PS50968">
    <property type="entry name" value="BIOTINYL_LIPOYL"/>
    <property type="match status" value="1"/>
</dbReference>
<protein>
    <recommendedName>
        <fullName>Dihydrolipoyllysine-residue succinyltransferase component of 2-oxoglutarate dehydrogenase complex</fullName>
        <ecNumber evidence="2">2.3.1.61</ecNumber>
    </recommendedName>
    <alternativeName>
        <fullName>2-oxoglutarate dehydrogenase complex component E2</fullName>
        <shortName>OGDC-E2</shortName>
    </alternativeName>
    <alternativeName>
        <fullName>Dihydrolipoamide succinyltransferase component of 2-oxoglutarate dehydrogenase complex</fullName>
    </alternativeName>
</protein>